<name>NUOI_PARS2</name>
<feature type="chain" id="PRO_1000166637" description="NADH-quinone oxidoreductase subunit I">
    <location>
        <begin position="1"/>
        <end position="211"/>
    </location>
</feature>
<feature type="domain" description="4Fe-4S ferredoxin-type 1" evidence="1">
    <location>
        <begin position="43"/>
        <end position="73"/>
    </location>
</feature>
<feature type="domain" description="4Fe-4S ferredoxin-type 2" evidence="1">
    <location>
        <begin position="89"/>
        <end position="118"/>
    </location>
</feature>
<feature type="region of interest" description="Disordered" evidence="2">
    <location>
        <begin position="21"/>
        <end position="41"/>
    </location>
</feature>
<feature type="region of interest" description="Disordered" evidence="2">
    <location>
        <begin position="141"/>
        <end position="211"/>
    </location>
</feature>
<feature type="compositionally biased region" description="Basic and acidic residues" evidence="2">
    <location>
        <begin position="152"/>
        <end position="166"/>
    </location>
</feature>
<feature type="compositionally biased region" description="Acidic residues" evidence="2">
    <location>
        <begin position="179"/>
        <end position="191"/>
    </location>
</feature>
<feature type="compositionally biased region" description="Basic and acidic residues" evidence="2">
    <location>
        <begin position="192"/>
        <end position="211"/>
    </location>
</feature>
<feature type="binding site" evidence="1">
    <location>
        <position position="53"/>
    </location>
    <ligand>
        <name>[4Fe-4S] cluster</name>
        <dbReference type="ChEBI" id="CHEBI:49883"/>
        <label>1</label>
    </ligand>
</feature>
<feature type="binding site" evidence="1">
    <location>
        <position position="56"/>
    </location>
    <ligand>
        <name>[4Fe-4S] cluster</name>
        <dbReference type="ChEBI" id="CHEBI:49883"/>
        <label>1</label>
    </ligand>
</feature>
<feature type="binding site" evidence="1">
    <location>
        <position position="59"/>
    </location>
    <ligand>
        <name>[4Fe-4S] cluster</name>
        <dbReference type="ChEBI" id="CHEBI:49883"/>
        <label>1</label>
    </ligand>
</feature>
<feature type="binding site" evidence="1">
    <location>
        <position position="63"/>
    </location>
    <ligand>
        <name>[4Fe-4S] cluster</name>
        <dbReference type="ChEBI" id="CHEBI:49883"/>
        <label>2</label>
    </ligand>
</feature>
<feature type="binding site" evidence="1">
    <location>
        <position position="98"/>
    </location>
    <ligand>
        <name>[4Fe-4S] cluster</name>
        <dbReference type="ChEBI" id="CHEBI:49883"/>
        <label>2</label>
    </ligand>
</feature>
<feature type="binding site" evidence="1">
    <location>
        <position position="101"/>
    </location>
    <ligand>
        <name>[4Fe-4S] cluster</name>
        <dbReference type="ChEBI" id="CHEBI:49883"/>
        <label>2</label>
    </ligand>
</feature>
<feature type="binding site" evidence="1">
    <location>
        <position position="104"/>
    </location>
    <ligand>
        <name>[4Fe-4S] cluster</name>
        <dbReference type="ChEBI" id="CHEBI:49883"/>
        <label>2</label>
    </ligand>
</feature>
<feature type="binding site" evidence="1">
    <location>
        <position position="108"/>
    </location>
    <ligand>
        <name>[4Fe-4S] cluster</name>
        <dbReference type="ChEBI" id="CHEBI:49883"/>
        <label>1</label>
    </ligand>
</feature>
<proteinExistence type="inferred from homology"/>
<sequence>MGILDPYKGFGVTFSTMFKKPTTEQYPEQKKETAPRFHGRHQLNRHPDGLEKCVGCELCAWACPADAIYVEGADNTDEQRFSPGERYGRVYQINYLRCILCGLCIEACPTRALTMSNDYELADDSRDDLIFTKEQLLAPLRAGMESPPHPMRLGESETDYYTRDPDAPLPWQVGGSPADEADEAGEAGEAGEAERAADKVPAHGAGSERPR</sequence>
<comment type="function">
    <text evidence="1">NDH-1 shuttles electrons from NADH, via FMN and iron-sulfur (Fe-S) centers, to quinones in the respiratory chain. The immediate electron acceptor for the enzyme in this species is believed to be ubiquinone. Couples the redox reaction to proton translocation (for every two electrons transferred, four hydrogen ions are translocated across the cytoplasmic membrane), and thus conserves the redox energy in a proton gradient.</text>
</comment>
<comment type="catalytic activity">
    <reaction evidence="1">
        <text>a quinone + NADH + 5 H(+)(in) = a quinol + NAD(+) + 4 H(+)(out)</text>
        <dbReference type="Rhea" id="RHEA:57888"/>
        <dbReference type="ChEBI" id="CHEBI:15378"/>
        <dbReference type="ChEBI" id="CHEBI:24646"/>
        <dbReference type="ChEBI" id="CHEBI:57540"/>
        <dbReference type="ChEBI" id="CHEBI:57945"/>
        <dbReference type="ChEBI" id="CHEBI:132124"/>
    </reaction>
</comment>
<comment type="cofactor">
    <cofactor evidence="1">
        <name>[4Fe-4S] cluster</name>
        <dbReference type="ChEBI" id="CHEBI:49883"/>
    </cofactor>
    <text evidence="1">Binds 2 [4Fe-4S] clusters per subunit.</text>
</comment>
<comment type="subunit">
    <text evidence="1">NDH-1 is composed of 14 different subunits. Subunits NuoA, H, J, K, L, M, N constitute the membrane sector of the complex.</text>
</comment>
<comment type="subcellular location">
    <subcellularLocation>
        <location evidence="1">Cell membrane</location>
        <topology evidence="1">Peripheral membrane protein</topology>
    </subcellularLocation>
</comment>
<comment type="similarity">
    <text evidence="1">Belongs to the complex I 23 kDa subunit family.</text>
</comment>
<reference key="1">
    <citation type="journal article" date="2007" name="Genome Res.">
        <title>Genome characteristics of facultatively symbiotic Frankia sp. strains reflect host range and host plant biogeography.</title>
        <authorList>
            <person name="Normand P."/>
            <person name="Lapierre P."/>
            <person name="Tisa L.S."/>
            <person name="Gogarten J.P."/>
            <person name="Alloisio N."/>
            <person name="Bagnarol E."/>
            <person name="Bassi C.A."/>
            <person name="Berry A.M."/>
            <person name="Bickhart D.M."/>
            <person name="Choisne N."/>
            <person name="Couloux A."/>
            <person name="Cournoyer B."/>
            <person name="Cruveiller S."/>
            <person name="Daubin V."/>
            <person name="Demange N."/>
            <person name="Francino M.P."/>
            <person name="Goltsman E."/>
            <person name="Huang Y."/>
            <person name="Kopp O.R."/>
            <person name="Labarre L."/>
            <person name="Lapidus A."/>
            <person name="Lavire C."/>
            <person name="Marechal J."/>
            <person name="Martinez M."/>
            <person name="Mastronunzio J.E."/>
            <person name="Mullin B.C."/>
            <person name="Niemann J."/>
            <person name="Pujic P."/>
            <person name="Rawnsley T."/>
            <person name="Rouy Z."/>
            <person name="Schenowitz C."/>
            <person name="Sellstedt A."/>
            <person name="Tavares F."/>
            <person name="Tomkins J.P."/>
            <person name="Vallenet D."/>
            <person name="Valverde C."/>
            <person name="Wall L.G."/>
            <person name="Wang Y."/>
            <person name="Medigue C."/>
            <person name="Benson D.R."/>
        </authorList>
    </citation>
    <scope>NUCLEOTIDE SEQUENCE [LARGE SCALE GENOMIC DNA]</scope>
    <source>
        <strain>EAN1pec</strain>
    </source>
</reference>
<protein>
    <recommendedName>
        <fullName evidence="1">NADH-quinone oxidoreductase subunit I</fullName>
        <ecNumber evidence="1">7.1.1.-</ecNumber>
    </recommendedName>
    <alternativeName>
        <fullName evidence="1">NADH dehydrogenase I subunit I</fullName>
    </alternativeName>
    <alternativeName>
        <fullName evidence="1">NDH-1 subunit I</fullName>
    </alternativeName>
</protein>
<gene>
    <name evidence="1" type="primary">nuoI</name>
    <name type="ordered locus">Franean1_6086</name>
</gene>
<dbReference type="EC" id="7.1.1.-" evidence="1"/>
<dbReference type="EMBL" id="CP000820">
    <property type="protein sequence ID" value="ABW15430.1"/>
    <property type="molecule type" value="Genomic_DNA"/>
</dbReference>
<dbReference type="RefSeq" id="WP_020463511.1">
    <property type="nucleotide sequence ID" value="NC_009921.1"/>
</dbReference>
<dbReference type="SMR" id="A8LC93"/>
<dbReference type="STRING" id="298653.Franean1_6086"/>
<dbReference type="KEGG" id="fre:Franean1_6086"/>
<dbReference type="eggNOG" id="COG1143">
    <property type="taxonomic scope" value="Bacteria"/>
</dbReference>
<dbReference type="HOGENOM" id="CLU_067218_4_0_11"/>
<dbReference type="GO" id="GO:0005886">
    <property type="term" value="C:plasma membrane"/>
    <property type="evidence" value="ECO:0007669"/>
    <property type="project" value="UniProtKB-SubCell"/>
</dbReference>
<dbReference type="GO" id="GO:0051539">
    <property type="term" value="F:4 iron, 4 sulfur cluster binding"/>
    <property type="evidence" value="ECO:0007669"/>
    <property type="project" value="UniProtKB-KW"/>
</dbReference>
<dbReference type="GO" id="GO:0005506">
    <property type="term" value="F:iron ion binding"/>
    <property type="evidence" value="ECO:0007669"/>
    <property type="project" value="UniProtKB-UniRule"/>
</dbReference>
<dbReference type="GO" id="GO:0050136">
    <property type="term" value="F:NADH:ubiquinone reductase (non-electrogenic) activity"/>
    <property type="evidence" value="ECO:0007669"/>
    <property type="project" value="UniProtKB-UniRule"/>
</dbReference>
<dbReference type="GO" id="GO:0048038">
    <property type="term" value="F:quinone binding"/>
    <property type="evidence" value="ECO:0007669"/>
    <property type="project" value="UniProtKB-KW"/>
</dbReference>
<dbReference type="GO" id="GO:0009060">
    <property type="term" value="P:aerobic respiration"/>
    <property type="evidence" value="ECO:0007669"/>
    <property type="project" value="TreeGrafter"/>
</dbReference>
<dbReference type="FunFam" id="3.30.70.3270:FF:000007">
    <property type="entry name" value="NADH-quinone oxidoreductase subunit I"/>
    <property type="match status" value="1"/>
</dbReference>
<dbReference type="Gene3D" id="3.30.70.3270">
    <property type="match status" value="1"/>
</dbReference>
<dbReference type="HAMAP" id="MF_01351">
    <property type="entry name" value="NDH1_NuoI"/>
    <property type="match status" value="1"/>
</dbReference>
<dbReference type="InterPro" id="IPR017896">
    <property type="entry name" value="4Fe4S_Fe-S-bd"/>
</dbReference>
<dbReference type="InterPro" id="IPR017900">
    <property type="entry name" value="4Fe4S_Fe_S_CS"/>
</dbReference>
<dbReference type="InterPro" id="IPR010226">
    <property type="entry name" value="NADH_quinone_OxRdtase_chainI"/>
</dbReference>
<dbReference type="NCBIfam" id="TIGR01971">
    <property type="entry name" value="NuoI"/>
    <property type="match status" value="1"/>
</dbReference>
<dbReference type="NCBIfam" id="NF004537">
    <property type="entry name" value="PRK05888.1-3"/>
    <property type="match status" value="1"/>
</dbReference>
<dbReference type="PANTHER" id="PTHR10849:SF20">
    <property type="entry name" value="NADH DEHYDROGENASE [UBIQUINONE] IRON-SULFUR PROTEIN 8, MITOCHONDRIAL"/>
    <property type="match status" value="1"/>
</dbReference>
<dbReference type="PANTHER" id="PTHR10849">
    <property type="entry name" value="NADH DEHYDROGENASE UBIQUINONE IRON-SULFUR PROTEIN 8, MITOCHONDRIAL"/>
    <property type="match status" value="1"/>
</dbReference>
<dbReference type="Pfam" id="PF12838">
    <property type="entry name" value="Fer4_7"/>
    <property type="match status" value="1"/>
</dbReference>
<dbReference type="SUPFAM" id="SSF54862">
    <property type="entry name" value="4Fe-4S ferredoxins"/>
    <property type="match status" value="1"/>
</dbReference>
<dbReference type="PROSITE" id="PS00198">
    <property type="entry name" value="4FE4S_FER_1"/>
    <property type="match status" value="2"/>
</dbReference>
<dbReference type="PROSITE" id="PS51379">
    <property type="entry name" value="4FE4S_FER_2"/>
    <property type="match status" value="2"/>
</dbReference>
<organism>
    <name type="scientific">Parafrankia sp. (strain EAN1pec)</name>
    <dbReference type="NCBI Taxonomy" id="298653"/>
    <lineage>
        <taxon>Bacteria</taxon>
        <taxon>Bacillati</taxon>
        <taxon>Actinomycetota</taxon>
        <taxon>Actinomycetes</taxon>
        <taxon>Frankiales</taxon>
        <taxon>Frankiaceae</taxon>
        <taxon>Parafrankia</taxon>
    </lineage>
</organism>
<accession>A8LC93</accession>
<keyword id="KW-0004">4Fe-4S</keyword>
<keyword id="KW-1003">Cell membrane</keyword>
<keyword id="KW-0408">Iron</keyword>
<keyword id="KW-0411">Iron-sulfur</keyword>
<keyword id="KW-0472">Membrane</keyword>
<keyword id="KW-0479">Metal-binding</keyword>
<keyword id="KW-0520">NAD</keyword>
<keyword id="KW-0874">Quinone</keyword>
<keyword id="KW-0677">Repeat</keyword>
<keyword id="KW-1278">Translocase</keyword>
<keyword id="KW-0830">Ubiquinone</keyword>
<evidence type="ECO:0000255" key="1">
    <source>
        <dbReference type="HAMAP-Rule" id="MF_01351"/>
    </source>
</evidence>
<evidence type="ECO:0000256" key="2">
    <source>
        <dbReference type="SAM" id="MobiDB-lite"/>
    </source>
</evidence>